<keyword id="KW-1185">Reference proteome</keyword>
<gene>
    <name type="ordered locus">Rv1486c</name>
    <name type="ORF">MTCY277.07c</name>
</gene>
<sequence length="288" mass="30129">MWCPSVSLSIWANAWLAGKAAPDDVLDALSLWAPTQSVAAYDAVAAGHTGLPWPDVHDAGTVSLLQTLRAAVGRRRLRGTINVVLPVPGDVRGLAAGTQFEHDALAAGEAVIVANPEDPGSAVGLVPEFSYGDVDEAAQSEPLTPELCALSWMVYSLPGAPVLEHYELGDAEYALRSAVRSAAEALSTIGLGSSDVAKPRGLVEQLLESSRQHRVPDHAPSRALRVLENAAHVDAIIAVSAGLSRLPIGTQSLSDAQRATDALRPLTAVVRSARMSAVTAILHSAWPD</sequence>
<protein>
    <recommendedName>
        <fullName>Uncharacterized protein Rv1486c</fullName>
    </recommendedName>
</protein>
<feature type="chain" id="PRO_0000103853" description="Uncharacterized protein Rv1486c">
    <location>
        <begin position="1"/>
        <end position="288"/>
    </location>
</feature>
<evidence type="ECO:0000305" key="1"/>
<organism>
    <name type="scientific">Mycobacterium tuberculosis (strain ATCC 25618 / H37Rv)</name>
    <dbReference type="NCBI Taxonomy" id="83332"/>
    <lineage>
        <taxon>Bacteria</taxon>
        <taxon>Bacillati</taxon>
        <taxon>Actinomycetota</taxon>
        <taxon>Actinomycetes</taxon>
        <taxon>Mycobacteriales</taxon>
        <taxon>Mycobacteriaceae</taxon>
        <taxon>Mycobacterium</taxon>
        <taxon>Mycobacterium tuberculosis complex</taxon>
    </lineage>
</organism>
<dbReference type="EMBL" id="AL123456">
    <property type="protein sequence ID" value="CCP44246.1"/>
    <property type="molecule type" value="Genomic_DNA"/>
</dbReference>
<dbReference type="PIR" id="A70711">
    <property type="entry name" value="A70711"/>
</dbReference>
<dbReference type="RefSeq" id="NP_216002.2">
    <property type="nucleotide sequence ID" value="NC_000962.3"/>
</dbReference>
<dbReference type="RefSeq" id="WP_009935820.1">
    <property type="nucleotide sequence ID" value="NZ_NVQJ01000004.1"/>
</dbReference>
<dbReference type="SMR" id="P9WLX3"/>
<dbReference type="STRING" id="83332.Rv1486c"/>
<dbReference type="PaxDb" id="83332-Rv1486c"/>
<dbReference type="DNASU" id="886519"/>
<dbReference type="GeneID" id="886519"/>
<dbReference type="KEGG" id="mtu:Rv1486c"/>
<dbReference type="KEGG" id="mtv:RVBD_1486c"/>
<dbReference type="TubercuList" id="Rv1486c"/>
<dbReference type="eggNOG" id="ENOG5032EQ4">
    <property type="taxonomic scope" value="Bacteria"/>
</dbReference>
<dbReference type="InParanoid" id="P9WLX3"/>
<dbReference type="OrthoDB" id="5188961at2"/>
<dbReference type="PhylomeDB" id="P9WLX3"/>
<dbReference type="Proteomes" id="UP000001584">
    <property type="component" value="Chromosome"/>
</dbReference>
<reference key="1">
    <citation type="journal article" date="1998" name="Nature">
        <title>Deciphering the biology of Mycobacterium tuberculosis from the complete genome sequence.</title>
        <authorList>
            <person name="Cole S.T."/>
            <person name="Brosch R."/>
            <person name="Parkhill J."/>
            <person name="Garnier T."/>
            <person name="Churcher C.M."/>
            <person name="Harris D.E."/>
            <person name="Gordon S.V."/>
            <person name="Eiglmeier K."/>
            <person name="Gas S."/>
            <person name="Barry C.E. III"/>
            <person name="Tekaia F."/>
            <person name="Badcock K."/>
            <person name="Basham D."/>
            <person name="Brown D."/>
            <person name="Chillingworth T."/>
            <person name="Connor R."/>
            <person name="Davies R.M."/>
            <person name="Devlin K."/>
            <person name="Feltwell T."/>
            <person name="Gentles S."/>
            <person name="Hamlin N."/>
            <person name="Holroyd S."/>
            <person name="Hornsby T."/>
            <person name="Jagels K."/>
            <person name="Krogh A."/>
            <person name="McLean J."/>
            <person name="Moule S."/>
            <person name="Murphy L.D."/>
            <person name="Oliver S."/>
            <person name="Osborne J."/>
            <person name="Quail M.A."/>
            <person name="Rajandream M.A."/>
            <person name="Rogers J."/>
            <person name="Rutter S."/>
            <person name="Seeger K."/>
            <person name="Skelton S."/>
            <person name="Squares S."/>
            <person name="Squares R."/>
            <person name="Sulston J.E."/>
            <person name="Taylor K."/>
            <person name="Whitehead S."/>
            <person name="Barrell B.G."/>
        </authorList>
    </citation>
    <scope>NUCLEOTIDE SEQUENCE [LARGE SCALE GENOMIC DNA]</scope>
    <source>
        <strain>ATCC 25618 / H37Rv</strain>
    </source>
</reference>
<reference key="2">
    <citation type="journal article" date="2011" name="Mol. Cell. Proteomics">
        <title>Proteogenomic analysis of Mycobacterium tuberculosis by high resolution mass spectrometry.</title>
        <authorList>
            <person name="Kelkar D.S."/>
            <person name="Kumar D."/>
            <person name="Kumar P."/>
            <person name="Balakrishnan L."/>
            <person name="Muthusamy B."/>
            <person name="Yadav A.K."/>
            <person name="Shrivastava P."/>
            <person name="Marimuthu A."/>
            <person name="Anand S."/>
            <person name="Sundaram H."/>
            <person name="Kingsbury R."/>
            <person name="Harsha H.C."/>
            <person name="Nair B."/>
            <person name="Prasad T.S."/>
            <person name="Chauhan D.S."/>
            <person name="Katoch K."/>
            <person name="Katoch V.M."/>
            <person name="Kumar P."/>
            <person name="Chaerkady R."/>
            <person name="Ramachandran S."/>
            <person name="Dash D."/>
            <person name="Pandey A."/>
        </authorList>
    </citation>
    <scope>IDENTIFICATION BY MASS SPECTROMETRY [LARGE SCALE ANALYSIS]</scope>
    <source>
        <strain>ATCC 25618 / H37Rv</strain>
    </source>
</reference>
<comment type="similarity">
    <text evidence="1">To M.bovis Mb1522c, M.leprae ML1804 and M.avium MAV321.</text>
</comment>
<accession>P9WLX3</accession>
<accession>L0T6T0</accession>
<accession>P71766</accession>
<proteinExistence type="evidence at protein level"/>
<name>Y1486_MYCTU</name>